<protein>
    <recommendedName>
        <fullName>Beta-mannosyltransferase 8</fullName>
        <ecNumber>2.4.1.-</ecNumber>
    </recommendedName>
    <alternativeName>
        <fullName>WRY family protein 3</fullName>
    </alternativeName>
</protein>
<feature type="chain" id="PRO_0000426076" description="Beta-mannosyltransferase 8">
    <location>
        <begin position="1"/>
        <end position="694"/>
    </location>
</feature>
<feature type="topological domain" description="Cytoplasmic" evidence="2">
    <location>
        <begin position="1"/>
        <end position="11"/>
    </location>
</feature>
<feature type="transmembrane region" description="Helical" evidence="2">
    <location>
        <begin position="12"/>
        <end position="29"/>
    </location>
</feature>
<feature type="topological domain" description="Extracellular" evidence="2">
    <location>
        <begin position="30"/>
        <end position="694"/>
    </location>
</feature>
<feature type="glycosylation site" description="N-linked (GlcNAc...) asparagine" evidence="2">
    <location>
        <position position="101"/>
    </location>
</feature>
<feature type="glycosylation site" description="N-linked (GlcNAc...) asparagine" evidence="2">
    <location>
        <position position="542"/>
    </location>
</feature>
<comment type="function">
    <text evidence="1 4">Beta-mannosyltransferase involved in cell wall biosynthesis through beta-1,2-mannosylation of cell wall phosphopeptidomannan (By similarity). Plays a role in the ability to produce hyphae in the presence of three bacterial species.</text>
</comment>
<comment type="subcellular location">
    <subcellularLocation>
        <location evidence="5">Membrane</location>
        <topology evidence="5">Single-pass type II membrane protein</topology>
    </subcellularLocation>
</comment>
<comment type="disruption phenotype">
    <text evidence="3 4">Leads to a hypo-filamentous phenotype.</text>
</comment>
<comment type="similarity">
    <text evidence="5">Belongs to the BMT family.</text>
</comment>
<organism>
    <name type="scientific">Candida albicans (strain SC5314 / ATCC MYA-2876)</name>
    <name type="common">Yeast</name>
    <dbReference type="NCBI Taxonomy" id="237561"/>
    <lineage>
        <taxon>Eukaryota</taxon>
        <taxon>Fungi</taxon>
        <taxon>Dikarya</taxon>
        <taxon>Ascomycota</taxon>
        <taxon>Saccharomycotina</taxon>
        <taxon>Pichiomycetes</taxon>
        <taxon>Debaryomycetaceae</taxon>
        <taxon>Candida/Lodderomyces clade</taxon>
        <taxon>Candida</taxon>
    </lineage>
</organism>
<evidence type="ECO:0000250" key="1"/>
<evidence type="ECO:0000255" key="2"/>
<evidence type="ECO:0000269" key="3">
    <source>
    </source>
</evidence>
<evidence type="ECO:0000269" key="4">
    <source>
    </source>
</evidence>
<evidence type="ECO:0000305" key="5"/>
<name>BMT8_CANAL</name>
<reference key="1">
    <citation type="journal article" date="2004" name="Proc. Natl. Acad. Sci. U.S.A.">
        <title>The diploid genome sequence of Candida albicans.</title>
        <authorList>
            <person name="Jones T."/>
            <person name="Federspiel N.A."/>
            <person name="Chibana H."/>
            <person name="Dungan J."/>
            <person name="Kalman S."/>
            <person name="Magee B.B."/>
            <person name="Newport G."/>
            <person name="Thorstenson Y.R."/>
            <person name="Agabian N."/>
            <person name="Magee P.T."/>
            <person name="Davis R.W."/>
            <person name="Scherer S."/>
        </authorList>
    </citation>
    <scope>NUCLEOTIDE SEQUENCE [LARGE SCALE GENOMIC DNA]</scope>
    <source>
        <strain>SC5314 / ATCC MYA-2876</strain>
    </source>
</reference>
<reference key="2">
    <citation type="journal article" date="2007" name="Genome Biol.">
        <title>Assembly of the Candida albicans genome into sixteen supercontigs aligned on the eight chromosomes.</title>
        <authorList>
            <person name="van het Hoog M."/>
            <person name="Rast T.J."/>
            <person name="Martchenko M."/>
            <person name="Grindle S."/>
            <person name="Dignard D."/>
            <person name="Hogues H."/>
            <person name="Cuomo C."/>
            <person name="Berriman M."/>
            <person name="Scherer S."/>
            <person name="Magee B.B."/>
            <person name="Whiteway M."/>
            <person name="Chibana H."/>
            <person name="Nantel A."/>
            <person name="Magee P.T."/>
        </authorList>
    </citation>
    <scope>GENOME REANNOTATION</scope>
    <source>
        <strain>SC5314 / ATCC MYA-2876</strain>
    </source>
</reference>
<reference key="3">
    <citation type="journal article" date="2013" name="Genome Biol.">
        <title>Assembly of a phased diploid Candida albicans genome facilitates allele-specific measurements and provides a simple model for repeat and indel structure.</title>
        <authorList>
            <person name="Muzzey D."/>
            <person name="Schwartz K."/>
            <person name="Weissman J.S."/>
            <person name="Sherlock G."/>
        </authorList>
    </citation>
    <scope>NUCLEOTIDE SEQUENCE [LARGE SCALE GENOMIC DNA]</scope>
    <scope>GENOME REANNOTATION</scope>
    <source>
        <strain>SC5314 / ATCC MYA-2876</strain>
    </source>
</reference>
<reference key="4">
    <citation type="journal article" date="2008" name="J. Biol. Chem.">
        <title>Identification of a new family of genes involved in beta-1,2-mannosylation of glycans in Pichia pastoris and Candida albicans.</title>
        <authorList>
            <person name="Mille C."/>
            <person name="Bobrowicz P."/>
            <person name="Trinel P.A."/>
            <person name="Li H."/>
            <person name="Maes E."/>
            <person name="Guerardel Y."/>
            <person name="Fradin C."/>
            <person name="Martinez-Esparza M."/>
            <person name="Davidson R.C."/>
            <person name="Janbon G."/>
            <person name="Poulain D."/>
            <person name="Wildt S."/>
        </authorList>
    </citation>
    <scope>IDENTIFICATION</scope>
</reference>
<reference key="5">
    <citation type="journal article" date="2010" name="Mol. Microbiol.">
        <title>Forward genetics in Candida albicans that reveals the Arp2/3 complex is required for hyphal formation, but not endocytosis.</title>
        <authorList>
            <person name="Epp E."/>
            <person name="Walther A."/>
            <person name="Lepine G."/>
            <person name="Leon Z."/>
            <person name="Mullick A."/>
            <person name="Raymond M."/>
            <person name="Wendland J."/>
            <person name="Whiteway M."/>
        </authorList>
    </citation>
    <scope>DISRUPTION PHENOTYPE</scope>
</reference>
<reference key="6">
    <citation type="journal article" date="2013" name="PLoS ONE">
        <title>Characterization of genetic determinants that modulate Candida albicans filamentation in the presence of bacteria.</title>
        <authorList>
            <person name="Fox S.J."/>
            <person name="Shelton B.T."/>
            <person name="Kruppa M.D."/>
        </authorList>
    </citation>
    <scope>FUNCTION</scope>
    <scope>DISRUPTION PHENOTYPE</scope>
</reference>
<accession>Q5AHD6</accession>
<accession>A0A1D8PH12</accession>
<accession>Q5AHR2</accession>
<dbReference type="EC" id="2.4.1.-"/>
<dbReference type="EMBL" id="CP017624">
    <property type="protein sequence ID" value="AOW27393.1"/>
    <property type="molecule type" value="Genomic_DNA"/>
</dbReference>
<dbReference type="RefSeq" id="XP_720983.1">
    <property type="nucleotide sequence ID" value="XM_715890.2"/>
</dbReference>
<dbReference type="STRING" id="237561.Q5AHD6"/>
<dbReference type="CAZy" id="GT91">
    <property type="family name" value="Glycosyltransferase Family 91"/>
</dbReference>
<dbReference type="GlyCosmos" id="Q5AHD6">
    <property type="glycosylation" value="2 sites, No reported glycans"/>
</dbReference>
<dbReference type="EnsemblFungi" id="C2_03600W_A-T">
    <property type="protein sequence ID" value="C2_03600W_A-T-p1"/>
    <property type="gene ID" value="C2_03600W_A"/>
</dbReference>
<dbReference type="GeneID" id="3637442"/>
<dbReference type="KEGG" id="cal:CAALFM_C203600WA"/>
<dbReference type="CGD" id="CAL0000195105">
    <property type="gene designation" value="BMT8"/>
</dbReference>
<dbReference type="VEuPathDB" id="FungiDB:C2_03600W_A"/>
<dbReference type="eggNOG" id="ENOG502QTZG">
    <property type="taxonomic scope" value="Eukaryota"/>
</dbReference>
<dbReference type="HOGENOM" id="CLU_013841_1_1_1"/>
<dbReference type="InParanoid" id="Q5AHD6"/>
<dbReference type="OrthoDB" id="3631276at2759"/>
<dbReference type="PRO" id="PR:Q5AHD6"/>
<dbReference type="Proteomes" id="UP000000559">
    <property type="component" value="Chromosome 2"/>
</dbReference>
<dbReference type="GO" id="GO:0016020">
    <property type="term" value="C:membrane"/>
    <property type="evidence" value="ECO:0007669"/>
    <property type="project" value="UniProtKB-SubCell"/>
</dbReference>
<dbReference type="GO" id="GO:0000030">
    <property type="term" value="F:mannosyltransferase activity"/>
    <property type="evidence" value="ECO:0007669"/>
    <property type="project" value="InterPro"/>
</dbReference>
<dbReference type="GO" id="GO:0071555">
    <property type="term" value="P:cell wall organization"/>
    <property type="evidence" value="ECO:0007669"/>
    <property type="project" value="UniProtKB-KW"/>
</dbReference>
<dbReference type="GO" id="GO:0030447">
    <property type="term" value="P:filamentous growth"/>
    <property type="evidence" value="ECO:0000315"/>
    <property type="project" value="CGD"/>
</dbReference>
<dbReference type="InterPro" id="IPR021988">
    <property type="entry name" value="BMT1"/>
</dbReference>
<dbReference type="Pfam" id="PF12141">
    <property type="entry name" value="BMT"/>
    <property type="match status" value="1"/>
</dbReference>
<sequence>MKFPKLRKRTVYWAVLTVFALFTIHFVFQYKEHNSHRVQPIVLIPKAFPSLILNSFDTQNEELVPIKLLKNCQIIRSYHTGYEENTKLLGQEPQSNFHKFNFTVFSSMKPIGLDLKQCQLLSSSSQVEVNDAVNMDASLHDILGKLLQDIRHGKLEYLQEIAPFFLPELQLQLNLNIVDRFWYRFSGSSIWLDQYNMYFMISRIAYSPHGVKNQPVVSLTYGQLFDRNWNEVKNINLLVPSNDPSKNGGHDSFRIISFPYFLPIPFWHDIDNTDGNYFGPEDPRLILVRNKQGYEEPLLIFNSYHRKFVHYDDDEDSIMGQTVKFQRSMFMCWPWQYQMGKSNVEGTSNPEYDNKVYNRVIELKVKLLADMKSQKNWTPFISEDSTNKFDSYIYFVYRWANLDVLKCSLLGDVAGDCVFDYRLDETLVPQNKVGPLRGGTQLVNLRQVIPRSVYHRLLPSHREIFIGFARTHLDNCGCGKVMYRPNLVILVKDAADKTYYKISHISSSLSFDVPIIGWNVYKPDDLCFDSNVLIPYSVSNWNITSLELDIEGGRWVSNDQLTLTLSISDSTVHRLDIRGLFQSILDLADRSLFIPVDRETRVIDEFQNGLQNPGSNPLNQDVNSLGVNNDNIVCALDASVEFCFEYGAKFSIPKQEEFYEVEQQEFNEELIDPKKHQYFKILGKYLYDHASVNS</sequence>
<proteinExistence type="inferred from homology"/>
<keyword id="KW-0961">Cell wall biogenesis/degradation</keyword>
<keyword id="KW-0325">Glycoprotein</keyword>
<keyword id="KW-0328">Glycosyltransferase</keyword>
<keyword id="KW-0472">Membrane</keyword>
<keyword id="KW-1185">Reference proteome</keyword>
<keyword id="KW-0735">Signal-anchor</keyword>
<keyword id="KW-0808">Transferase</keyword>
<keyword id="KW-0812">Transmembrane</keyword>
<keyword id="KW-1133">Transmembrane helix</keyword>
<gene>
    <name type="primary">BMT8</name>
    <name type="synonym">WRY3</name>
    <name type="ordered locus">CAALFM_C203600WA</name>
    <name type="ORF">CaO19.8479</name>
    <name type="ORF">CaO19.860</name>
</gene>